<comment type="similarity">
    <text evidence="2">Belongs to the ubiquitin family.</text>
</comment>
<keyword id="KW-1185">Reference proteome</keyword>
<protein>
    <recommendedName>
        <fullName>Ubiquitin-like protein NEDD8-like protein 1</fullName>
    </recommendedName>
</protein>
<proteinExistence type="inferred from homology"/>
<name>NED81_DICDI</name>
<dbReference type="EMBL" id="AAFI02000042">
    <property type="protein sequence ID" value="EAL66613.1"/>
    <property type="molecule type" value="Genomic_DNA"/>
</dbReference>
<dbReference type="RefSeq" id="XP_640591.1">
    <property type="nucleotide sequence ID" value="XM_635499.1"/>
</dbReference>
<dbReference type="SMR" id="Q54TK0"/>
<dbReference type="PaxDb" id="44689-DDB0266409"/>
<dbReference type="EnsemblProtists" id="EAL66613">
    <property type="protein sequence ID" value="EAL66613"/>
    <property type="gene ID" value="DDB_G0281703"/>
</dbReference>
<dbReference type="GeneID" id="8623200"/>
<dbReference type="KEGG" id="ddi:DDB_G0281703"/>
<dbReference type="dictyBase" id="DDB_G0281703">
    <property type="gene designation" value="nedd8l1"/>
</dbReference>
<dbReference type="VEuPathDB" id="AmoebaDB:DDB_G0281703"/>
<dbReference type="HOGENOM" id="CLU_2364046_0_0_1"/>
<dbReference type="InParanoid" id="Q54TK0"/>
<dbReference type="PhylomeDB" id="Q54TK0"/>
<dbReference type="PRO" id="PR:Q54TK0"/>
<dbReference type="Proteomes" id="UP000002195">
    <property type="component" value="Chromosome 3"/>
</dbReference>
<dbReference type="GO" id="GO:0005737">
    <property type="term" value="C:cytoplasm"/>
    <property type="evidence" value="ECO:0000318"/>
    <property type="project" value="GO_Central"/>
</dbReference>
<dbReference type="GO" id="GO:0005634">
    <property type="term" value="C:nucleus"/>
    <property type="evidence" value="ECO:0000318"/>
    <property type="project" value="GO_Central"/>
</dbReference>
<dbReference type="GO" id="GO:0031386">
    <property type="term" value="F:protein tag activity"/>
    <property type="evidence" value="ECO:0000318"/>
    <property type="project" value="GO_Central"/>
</dbReference>
<dbReference type="GO" id="GO:0031625">
    <property type="term" value="F:ubiquitin protein ligase binding"/>
    <property type="evidence" value="ECO:0000318"/>
    <property type="project" value="GO_Central"/>
</dbReference>
<dbReference type="GO" id="GO:0019941">
    <property type="term" value="P:modification-dependent protein catabolic process"/>
    <property type="evidence" value="ECO:0000318"/>
    <property type="project" value="GO_Central"/>
</dbReference>
<dbReference type="GO" id="GO:0016567">
    <property type="term" value="P:protein ubiquitination"/>
    <property type="evidence" value="ECO:0000318"/>
    <property type="project" value="GO_Central"/>
</dbReference>
<dbReference type="CDD" id="cd17039">
    <property type="entry name" value="Ubl_ubiquitin_like"/>
    <property type="match status" value="1"/>
</dbReference>
<dbReference type="FunFam" id="3.10.20.90:FF:000648">
    <property type="entry name" value="NEDD8-like protein 1"/>
    <property type="match status" value="1"/>
</dbReference>
<dbReference type="Gene3D" id="3.10.20.90">
    <property type="entry name" value="Phosphatidylinositol 3-kinase Catalytic Subunit, Chain A, domain 1"/>
    <property type="match status" value="1"/>
</dbReference>
<dbReference type="InterPro" id="IPR000626">
    <property type="entry name" value="Ubiquitin-like_dom"/>
</dbReference>
<dbReference type="InterPro" id="IPR029071">
    <property type="entry name" value="Ubiquitin-like_domsf"/>
</dbReference>
<dbReference type="PANTHER" id="PTHR10621">
    <property type="entry name" value="UV EXCISION REPAIR PROTEIN RAD23"/>
    <property type="match status" value="1"/>
</dbReference>
<dbReference type="PANTHER" id="PTHR10621:SF0">
    <property type="entry name" value="UV EXCISION REPAIR PROTEIN RAD23"/>
    <property type="match status" value="1"/>
</dbReference>
<dbReference type="Pfam" id="PF00240">
    <property type="entry name" value="ubiquitin"/>
    <property type="match status" value="1"/>
</dbReference>
<dbReference type="SMART" id="SM00213">
    <property type="entry name" value="UBQ"/>
    <property type="match status" value="1"/>
</dbReference>
<dbReference type="SUPFAM" id="SSF54236">
    <property type="entry name" value="Ubiquitin-like"/>
    <property type="match status" value="1"/>
</dbReference>
<dbReference type="PROSITE" id="PS50053">
    <property type="entry name" value="UBIQUITIN_2"/>
    <property type="match status" value="1"/>
</dbReference>
<accession>Q54TK0</accession>
<gene>
    <name type="primary">nedd8l1</name>
    <name type="ORF">DDB_G0281703</name>
</gene>
<evidence type="ECO:0000256" key="1">
    <source>
        <dbReference type="SAM" id="MobiDB-lite"/>
    </source>
</evidence>
<evidence type="ECO:0000305" key="2"/>
<feature type="chain" id="PRO_0000328674" description="Ubiquitin-like protein NEDD8-like protein 1">
    <location>
        <begin position="1"/>
        <end position="96"/>
    </location>
</feature>
<feature type="region of interest" description="Disordered" evidence="1">
    <location>
        <begin position="75"/>
        <end position="96"/>
    </location>
</feature>
<feature type="compositionally biased region" description="Basic and acidic residues" evidence="1">
    <location>
        <begin position="79"/>
        <end position="96"/>
    </location>
</feature>
<reference key="1">
    <citation type="journal article" date="2005" name="Nature">
        <title>The genome of the social amoeba Dictyostelium discoideum.</title>
        <authorList>
            <person name="Eichinger L."/>
            <person name="Pachebat J.A."/>
            <person name="Gloeckner G."/>
            <person name="Rajandream M.A."/>
            <person name="Sucgang R."/>
            <person name="Berriman M."/>
            <person name="Song J."/>
            <person name="Olsen R."/>
            <person name="Szafranski K."/>
            <person name="Xu Q."/>
            <person name="Tunggal B."/>
            <person name="Kummerfeld S."/>
            <person name="Madera M."/>
            <person name="Konfortov B.A."/>
            <person name="Rivero F."/>
            <person name="Bankier A.T."/>
            <person name="Lehmann R."/>
            <person name="Hamlin N."/>
            <person name="Davies R."/>
            <person name="Gaudet P."/>
            <person name="Fey P."/>
            <person name="Pilcher K."/>
            <person name="Chen G."/>
            <person name="Saunders D."/>
            <person name="Sodergren E.J."/>
            <person name="Davis P."/>
            <person name="Kerhornou A."/>
            <person name="Nie X."/>
            <person name="Hall N."/>
            <person name="Anjard C."/>
            <person name="Hemphill L."/>
            <person name="Bason N."/>
            <person name="Farbrother P."/>
            <person name="Desany B."/>
            <person name="Just E."/>
            <person name="Morio T."/>
            <person name="Rost R."/>
            <person name="Churcher C.M."/>
            <person name="Cooper J."/>
            <person name="Haydock S."/>
            <person name="van Driessche N."/>
            <person name="Cronin A."/>
            <person name="Goodhead I."/>
            <person name="Muzny D.M."/>
            <person name="Mourier T."/>
            <person name="Pain A."/>
            <person name="Lu M."/>
            <person name="Harper D."/>
            <person name="Lindsay R."/>
            <person name="Hauser H."/>
            <person name="James K.D."/>
            <person name="Quiles M."/>
            <person name="Madan Babu M."/>
            <person name="Saito T."/>
            <person name="Buchrieser C."/>
            <person name="Wardroper A."/>
            <person name="Felder M."/>
            <person name="Thangavelu M."/>
            <person name="Johnson D."/>
            <person name="Knights A."/>
            <person name="Loulseged H."/>
            <person name="Mungall K.L."/>
            <person name="Oliver K."/>
            <person name="Price C."/>
            <person name="Quail M.A."/>
            <person name="Urushihara H."/>
            <person name="Hernandez J."/>
            <person name="Rabbinowitsch E."/>
            <person name="Steffen D."/>
            <person name="Sanders M."/>
            <person name="Ma J."/>
            <person name="Kohara Y."/>
            <person name="Sharp S."/>
            <person name="Simmonds M.N."/>
            <person name="Spiegler S."/>
            <person name="Tivey A."/>
            <person name="Sugano S."/>
            <person name="White B."/>
            <person name="Walker D."/>
            <person name="Woodward J.R."/>
            <person name="Winckler T."/>
            <person name="Tanaka Y."/>
            <person name="Shaulsky G."/>
            <person name="Schleicher M."/>
            <person name="Weinstock G.M."/>
            <person name="Rosenthal A."/>
            <person name="Cox E.C."/>
            <person name="Chisholm R.L."/>
            <person name="Gibbs R.A."/>
            <person name="Loomis W.F."/>
            <person name="Platzer M."/>
            <person name="Kay R.R."/>
            <person name="Williams J.G."/>
            <person name="Dear P.H."/>
            <person name="Noegel A.A."/>
            <person name="Barrell B.G."/>
            <person name="Kuspa A."/>
        </authorList>
    </citation>
    <scope>NUCLEOTIDE SEQUENCE [LARGE SCALE GENOMIC DNA]</scope>
    <source>
        <strain>AX4</strain>
    </source>
</reference>
<organism>
    <name type="scientific">Dictyostelium discoideum</name>
    <name type="common">Social amoeba</name>
    <dbReference type="NCBI Taxonomy" id="44689"/>
    <lineage>
        <taxon>Eukaryota</taxon>
        <taxon>Amoebozoa</taxon>
        <taxon>Evosea</taxon>
        <taxon>Eumycetozoa</taxon>
        <taxon>Dictyostelia</taxon>
        <taxon>Dictyosteliales</taxon>
        <taxon>Dictyosteliaceae</taxon>
        <taxon>Dictyostelium</taxon>
    </lineage>
</organism>
<sequence length="96" mass="10726">MLVKVSIHGQEYDLEVQPTDKIQEIKSKINELNGTPVEQIHPYIAGHAMKDGTTISDYPQIVEGSKIQVRVILKSQSDNSEKSEKSGKSEKDCILM</sequence>